<keyword id="KW-0175">Coiled coil</keyword>
<keyword id="KW-0342">GTP-binding</keyword>
<keyword id="KW-0547">Nucleotide-binding</keyword>
<keyword id="KW-1185">Reference proteome</keyword>
<sequence>MAATDVDIFSNEEKRNLSLGGHVGFDSLPDQLVSKSVTQGFCFNILCVGETGIGKSTLMNTLFNTMFENEEASHYQNGVYLRPRTYDLQESNVHLKLTIVDTVGFGDQINKEESYKPIVDYIDTQFENYLQEELKVKRSLFNYHDTRIHICLYFISPTGHSLKSLDLVTMKKLDSKVNIIPIIAKADTISKSELHKFKIKIMSELVSNGVQIYQFPTDDEAVTEINSSMNAHLPFAVVGSVEEVKVGNKTVRARQYPWGVVQVENESHCDFVKLREMLIRVNMEDLREQTHARHYELYRRCKLEEMGFKDTDPDSQPFSLQETYEAKRKEFLGDLQKKEEEMRQMFVNKVKETEAELKEKERELHEKFEQLKRMHQEEKRKVEEKRRELEEEMNAFNRRKVAAETLSLSQPLKKDKDKKN</sequence>
<name>SEP8A_DANRE</name>
<dbReference type="EMBL" id="BC055257">
    <property type="protein sequence ID" value="AAH55257.1"/>
    <property type="status" value="ALT_INIT"/>
    <property type="molecule type" value="mRNA"/>
</dbReference>
<dbReference type="EMBL" id="BC081662">
    <property type="protein sequence ID" value="AAH81662.1"/>
    <property type="status" value="ALT_INIT"/>
    <property type="molecule type" value="mRNA"/>
</dbReference>
<dbReference type="EMBL" id="BC100044">
    <property type="protein sequence ID" value="AAI00045.1"/>
    <property type="status" value="ALT_INIT"/>
    <property type="molecule type" value="mRNA"/>
</dbReference>
<dbReference type="RefSeq" id="NP_001108589.1">
    <property type="nucleotide sequence ID" value="NM_001115117.1"/>
</dbReference>
<dbReference type="SMR" id="Q642H3"/>
<dbReference type="FunCoup" id="Q642H3">
    <property type="interactions" value="1111"/>
</dbReference>
<dbReference type="STRING" id="7955.ENSDARP00000102463"/>
<dbReference type="PaxDb" id="7955-ENSDARP00000102463"/>
<dbReference type="GeneID" id="321590"/>
<dbReference type="KEGG" id="dre:321590"/>
<dbReference type="AGR" id="ZFIN:ZDB-GENE-030131-309"/>
<dbReference type="CTD" id="321590"/>
<dbReference type="ZFIN" id="ZDB-GENE-030131-309">
    <property type="gene designation" value="septin8a"/>
</dbReference>
<dbReference type="eggNOG" id="KOG3859">
    <property type="taxonomic scope" value="Eukaryota"/>
</dbReference>
<dbReference type="InParanoid" id="Q642H3"/>
<dbReference type="OrthoDB" id="416553at2759"/>
<dbReference type="PhylomeDB" id="Q642H3"/>
<dbReference type="PRO" id="PR:Q642H3"/>
<dbReference type="Proteomes" id="UP000000437">
    <property type="component" value="Chromosome 21"/>
</dbReference>
<dbReference type="GO" id="GO:0032153">
    <property type="term" value="C:cell division site"/>
    <property type="evidence" value="ECO:0000318"/>
    <property type="project" value="GO_Central"/>
</dbReference>
<dbReference type="GO" id="GO:0015630">
    <property type="term" value="C:microtubule cytoskeleton"/>
    <property type="evidence" value="ECO:0000318"/>
    <property type="project" value="GO_Central"/>
</dbReference>
<dbReference type="GO" id="GO:0031105">
    <property type="term" value="C:septin complex"/>
    <property type="evidence" value="ECO:0000318"/>
    <property type="project" value="GO_Central"/>
</dbReference>
<dbReference type="GO" id="GO:0005940">
    <property type="term" value="C:septin ring"/>
    <property type="evidence" value="ECO:0000318"/>
    <property type="project" value="GO_Central"/>
</dbReference>
<dbReference type="GO" id="GO:0005525">
    <property type="term" value="F:GTP binding"/>
    <property type="evidence" value="ECO:0007669"/>
    <property type="project" value="UniProtKB-KW"/>
</dbReference>
<dbReference type="GO" id="GO:0003924">
    <property type="term" value="F:GTPase activity"/>
    <property type="evidence" value="ECO:0000318"/>
    <property type="project" value="GO_Central"/>
</dbReference>
<dbReference type="GO" id="GO:0060090">
    <property type="term" value="F:molecular adaptor activity"/>
    <property type="evidence" value="ECO:0000318"/>
    <property type="project" value="GO_Central"/>
</dbReference>
<dbReference type="GO" id="GO:0061640">
    <property type="term" value="P:cytoskeleton-dependent cytokinesis"/>
    <property type="evidence" value="ECO:0000318"/>
    <property type="project" value="GO_Central"/>
</dbReference>
<dbReference type="GO" id="GO:0008104">
    <property type="term" value="P:protein localization"/>
    <property type="evidence" value="ECO:0000318"/>
    <property type="project" value="GO_Central"/>
</dbReference>
<dbReference type="CDD" id="cd01850">
    <property type="entry name" value="CDC_Septin"/>
    <property type="match status" value="1"/>
</dbReference>
<dbReference type="FunFam" id="3.40.50.300:FF:000036">
    <property type="entry name" value="septin-6 isoform X2"/>
    <property type="match status" value="1"/>
</dbReference>
<dbReference type="Gene3D" id="3.40.50.300">
    <property type="entry name" value="P-loop containing nucleotide triphosphate hydrolases"/>
    <property type="match status" value="1"/>
</dbReference>
<dbReference type="InterPro" id="IPR030379">
    <property type="entry name" value="G_SEPTIN_dom"/>
</dbReference>
<dbReference type="InterPro" id="IPR027417">
    <property type="entry name" value="P-loop_NTPase"/>
</dbReference>
<dbReference type="InterPro" id="IPR016491">
    <property type="entry name" value="Septin"/>
</dbReference>
<dbReference type="PANTHER" id="PTHR18884">
    <property type="entry name" value="SEPTIN"/>
    <property type="match status" value="1"/>
</dbReference>
<dbReference type="Pfam" id="PF00735">
    <property type="entry name" value="Septin"/>
    <property type="match status" value="1"/>
</dbReference>
<dbReference type="PIRSF" id="PIRSF006698">
    <property type="entry name" value="Septin"/>
    <property type="match status" value="1"/>
</dbReference>
<dbReference type="SUPFAM" id="SSF52540">
    <property type="entry name" value="P-loop containing nucleoside triphosphate hydrolases"/>
    <property type="match status" value="1"/>
</dbReference>
<dbReference type="PROSITE" id="PS51719">
    <property type="entry name" value="G_SEPTIN"/>
    <property type="match status" value="1"/>
</dbReference>
<organism>
    <name type="scientific">Danio rerio</name>
    <name type="common">Zebrafish</name>
    <name type="synonym">Brachydanio rerio</name>
    <dbReference type="NCBI Taxonomy" id="7955"/>
    <lineage>
        <taxon>Eukaryota</taxon>
        <taxon>Metazoa</taxon>
        <taxon>Chordata</taxon>
        <taxon>Craniata</taxon>
        <taxon>Vertebrata</taxon>
        <taxon>Euteleostomi</taxon>
        <taxon>Actinopterygii</taxon>
        <taxon>Neopterygii</taxon>
        <taxon>Teleostei</taxon>
        <taxon>Ostariophysi</taxon>
        <taxon>Cypriniformes</taxon>
        <taxon>Danionidae</taxon>
        <taxon>Danioninae</taxon>
        <taxon>Danio</taxon>
    </lineage>
</organism>
<proteinExistence type="evidence at transcript level"/>
<protein>
    <recommendedName>
        <fullName>Septin-8-A</fullName>
    </recommendedName>
</protein>
<gene>
    <name type="primary">sept8a</name>
</gene>
<feature type="chain" id="PRO_0000363229" description="Septin-8-A">
    <location>
        <begin position="1"/>
        <end position="420"/>
    </location>
</feature>
<feature type="domain" description="Septin-type G" evidence="3">
    <location>
        <begin position="39"/>
        <end position="305"/>
    </location>
</feature>
<feature type="region of interest" description="G1 motif" evidence="3">
    <location>
        <begin position="49"/>
        <end position="56"/>
    </location>
</feature>
<feature type="region of interest" description="G3 motif" evidence="3">
    <location>
        <begin position="101"/>
        <end position="104"/>
    </location>
</feature>
<feature type="region of interest" description="G4 motif" evidence="3">
    <location>
        <begin position="184"/>
        <end position="187"/>
    </location>
</feature>
<feature type="region of interest" description="Disordered" evidence="4">
    <location>
        <begin position="393"/>
        <end position="420"/>
    </location>
</feature>
<feature type="coiled-coil region" evidence="2">
    <location>
        <begin position="321"/>
        <end position="407"/>
    </location>
</feature>
<feature type="binding site" evidence="1">
    <location>
        <begin position="49"/>
        <end position="56"/>
    </location>
    <ligand>
        <name>GTP</name>
        <dbReference type="ChEBI" id="CHEBI:37565"/>
    </ligand>
</feature>
<feature type="binding site" evidence="1">
    <location>
        <position position="104"/>
    </location>
    <ligand>
        <name>GTP</name>
        <dbReference type="ChEBI" id="CHEBI:37565"/>
    </ligand>
</feature>
<feature type="binding site" evidence="1">
    <location>
        <begin position="185"/>
        <end position="193"/>
    </location>
    <ligand>
        <name>GTP</name>
        <dbReference type="ChEBI" id="CHEBI:37565"/>
    </ligand>
</feature>
<feature type="binding site" evidence="1">
    <location>
        <position position="239"/>
    </location>
    <ligand>
        <name>GTP</name>
        <dbReference type="ChEBI" id="CHEBI:37565"/>
    </ligand>
</feature>
<feature type="binding site" evidence="1">
    <location>
        <position position="254"/>
    </location>
    <ligand>
        <name>GTP</name>
        <dbReference type="ChEBI" id="CHEBI:37565"/>
    </ligand>
</feature>
<feature type="sequence conflict" description="In Ref. 1; AAH55257/AAI00045." evidence="5" ref="1">
    <original>V</original>
    <variation>I</variation>
    <location>
        <position position="136"/>
    </location>
</feature>
<evidence type="ECO:0000250" key="1"/>
<evidence type="ECO:0000255" key="2"/>
<evidence type="ECO:0000255" key="3">
    <source>
        <dbReference type="PROSITE-ProRule" id="PRU01056"/>
    </source>
</evidence>
<evidence type="ECO:0000256" key="4">
    <source>
        <dbReference type="SAM" id="MobiDB-lite"/>
    </source>
</evidence>
<evidence type="ECO:0000305" key="5"/>
<reference key="1">
    <citation type="submission" date="2005-08" db="EMBL/GenBank/DDBJ databases">
        <authorList>
            <consortium name="NIH - Zebrafish Gene Collection (ZGC) project"/>
        </authorList>
    </citation>
    <scope>NUCLEOTIDE SEQUENCE [LARGE SCALE MRNA]</scope>
    <source>
        <strain>AB</strain>
        <tissue>Embryo</tissue>
    </source>
</reference>
<accession>Q642H3</accession>
<accession>Q498W9</accession>
<accession>Q7SXT0</accession>
<comment type="similarity">
    <text evidence="3">Belongs to the TRAFAC class TrmE-Era-EngA-EngB-Septin-like GTPase superfamily. Septin GTPase family.</text>
</comment>
<comment type="sequence caution" evidence="5">
    <conflict type="erroneous initiation">
        <sequence resource="EMBL-CDS" id="AAH55257"/>
    </conflict>
</comment>
<comment type="sequence caution" evidence="5">
    <conflict type="erroneous initiation">
        <sequence resource="EMBL-CDS" id="AAH81662"/>
    </conflict>
</comment>
<comment type="sequence caution" evidence="5">
    <conflict type="erroneous initiation">
        <sequence resource="EMBL-CDS" id="AAI00045"/>
    </conflict>
</comment>